<dbReference type="EC" id="3.1.26.5" evidence="1"/>
<dbReference type="EMBL" id="CR936503">
    <property type="protein sequence ID" value="CAI56191.1"/>
    <property type="molecule type" value="Genomic_DNA"/>
</dbReference>
<dbReference type="RefSeq" id="WP_011375565.1">
    <property type="nucleotide sequence ID" value="NC_007576.1"/>
</dbReference>
<dbReference type="SMR" id="Q38UE4"/>
<dbReference type="STRING" id="314315.LCA_1885"/>
<dbReference type="GeneID" id="57132820"/>
<dbReference type="KEGG" id="lsa:LCA_1885"/>
<dbReference type="eggNOG" id="COG0594">
    <property type="taxonomic scope" value="Bacteria"/>
</dbReference>
<dbReference type="HOGENOM" id="CLU_117179_9_1_9"/>
<dbReference type="OrthoDB" id="9810867at2"/>
<dbReference type="Proteomes" id="UP000002707">
    <property type="component" value="Chromosome"/>
</dbReference>
<dbReference type="GO" id="GO:0030677">
    <property type="term" value="C:ribonuclease P complex"/>
    <property type="evidence" value="ECO:0007669"/>
    <property type="project" value="TreeGrafter"/>
</dbReference>
<dbReference type="GO" id="GO:0042781">
    <property type="term" value="F:3'-tRNA processing endoribonuclease activity"/>
    <property type="evidence" value="ECO:0007669"/>
    <property type="project" value="TreeGrafter"/>
</dbReference>
<dbReference type="GO" id="GO:0004526">
    <property type="term" value="F:ribonuclease P activity"/>
    <property type="evidence" value="ECO:0007669"/>
    <property type="project" value="UniProtKB-UniRule"/>
</dbReference>
<dbReference type="GO" id="GO:0000049">
    <property type="term" value="F:tRNA binding"/>
    <property type="evidence" value="ECO:0007669"/>
    <property type="project" value="UniProtKB-UniRule"/>
</dbReference>
<dbReference type="GO" id="GO:0001682">
    <property type="term" value="P:tRNA 5'-leader removal"/>
    <property type="evidence" value="ECO:0007669"/>
    <property type="project" value="UniProtKB-UniRule"/>
</dbReference>
<dbReference type="FunFam" id="3.30.230.10:FF:000021">
    <property type="entry name" value="Ribonuclease P protein component"/>
    <property type="match status" value="1"/>
</dbReference>
<dbReference type="Gene3D" id="3.30.230.10">
    <property type="match status" value="1"/>
</dbReference>
<dbReference type="HAMAP" id="MF_00227">
    <property type="entry name" value="RNase_P"/>
    <property type="match status" value="1"/>
</dbReference>
<dbReference type="InterPro" id="IPR020568">
    <property type="entry name" value="Ribosomal_Su5_D2-typ_SF"/>
</dbReference>
<dbReference type="InterPro" id="IPR014721">
    <property type="entry name" value="Ribsml_uS5_D2-typ_fold_subgr"/>
</dbReference>
<dbReference type="InterPro" id="IPR000100">
    <property type="entry name" value="RNase_P"/>
</dbReference>
<dbReference type="InterPro" id="IPR020539">
    <property type="entry name" value="RNase_P_CS"/>
</dbReference>
<dbReference type="NCBIfam" id="TIGR00188">
    <property type="entry name" value="rnpA"/>
    <property type="match status" value="1"/>
</dbReference>
<dbReference type="PANTHER" id="PTHR33992">
    <property type="entry name" value="RIBONUCLEASE P PROTEIN COMPONENT"/>
    <property type="match status" value="1"/>
</dbReference>
<dbReference type="PANTHER" id="PTHR33992:SF1">
    <property type="entry name" value="RIBONUCLEASE P PROTEIN COMPONENT"/>
    <property type="match status" value="1"/>
</dbReference>
<dbReference type="Pfam" id="PF00825">
    <property type="entry name" value="Ribonuclease_P"/>
    <property type="match status" value="1"/>
</dbReference>
<dbReference type="SUPFAM" id="SSF54211">
    <property type="entry name" value="Ribosomal protein S5 domain 2-like"/>
    <property type="match status" value="1"/>
</dbReference>
<dbReference type="PROSITE" id="PS00648">
    <property type="entry name" value="RIBONUCLEASE_P"/>
    <property type="match status" value="1"/>
</dbReference>
<name>RNPA_LATSS</name>
<proteinExistence type="inferred from homology"/>
<feature type="chain" id="PRO_1000021422" description="Ribonuclease P protein component">
    <location>
        <begin position="1"/>
        <end position="120"/>
    </location>
</feature>
<keyword id="KW-0255">Endonuclease</keyword>
<keyword id="KW-0378">Hydrolase</keyword>
<keyword id="KW-0540">Nuclease</keyword>
<keyword id="KW-1185">Reference proteome</keyword>
<keyword id="KW-0694">RNA-binding</keyword>
<keyword id="KW-0819">tRNA processing</keyword>
<protein>
    <recommendedName>
        <fullName evidence="1">Ribonuclease P protein component</fullName>
        <shortName evidence="1">RNase P protein</shortName>
        <shortName evidence="1">RNaseP protein</shortName>
        <ecNumber evidence="1">3.1.26.5</ecNumber>
    </recommendedName>
    <alternativeName>
        <fullName evidence="1">Protein C5</fullName>
    </alternativeName>
</protein>
<reference key="1">
    <citation type="journal article" date="2005" name="Nat. Biotechnol.">
        <title>The complete genome sequence of the meat-borne lactic acid bacterium Lactobacillus sakei 23K.</title>
        <authorList>
            <person name="Chaillou S."/>
            <person name="Champomier-Verges M.-C."/>
            <person name="Cornet M."/>
            <person name="Crutz-Le Coq A.-M."/>
            <person name="Dudez A.-M."/>
            <person name="Martin V."/>
            <person name="Beaufils S."/>
            <person name="Darbon-Rongere E."/>
            <person name="Bossy R."/>
            <person name="Loux V."/>
            <person name="Zagorec M."/>
        </authorList>
    </citation>
    <scope>NUCLEOTIDE SEQUENCE [LARGE SCALE GENOMIC DNA]</scope>
    <source>
        <strain>23K</strain>
    </source>
</reference>
<comment type="function">
    <text evidence="1">RNaseP catalyzes the removal of the 5'-leader sequence from pre-tRNA to produce the mature 5'-terminus. It can also cleave other RNA substrates such as 4.5S RNA. The protein component plays an auxiliary but essential role in vivo by binding to the 5'-leader sequence and broadening the substrate specificity of the ribozyme.</text>
</comment>
<comment type="catalytic activity">
    <reaction evidence="1">
        <text>Endonucleolytic cleavage of RNA, removing 5'-extranucleotides from tRNA precursor.</text>
        <dbReference type="EC" id="3.1.26.5"/>
    </reaction>
</comment>
<comment type="subunit">
    <text evidence="1">Consists of a catalytic RNA component (M1 or rnpB) and a protein subunit.</text>
</comment>
<comment type="similarity">
    <text evidence="1">Belongs to the RnpA family.</text>
</comment>
<accession>Q38UE4</accession>
<evidence type="ECO:0000255" key="1">
    <source>
        <dbReference type="HAMAP-Rule" id="MF_00227"/>
    </source>
</evidence>
<sequence>MRKSYRVKKEQDFQTVFDASQSVANRNFVVYRLDKPGQKHFRVGLSVGKKVGNAVMRNQVKRYIRQSITELKPDLLQPVDFLVIARRGANQLTMAETKQNLIHVFKLAKLLKEEADSASE</sequence>
<gene>
    <name evidence="1" type="primary">rnpA</name>
    <name type="ordered locus">LCA_1885</name>
</gene>
<organism>
    <name type="scientific">Latilactobacillus sakei subsp. sakei (strain 23K)</name>
    <name type="common">Lactobacillus sakei subsp. sakei</name>
    <dbReference type="NCBI Taxonomy" id="314315"/>
    <lineage>
        <taxon>Bacteria</taxon>
        <taxon>Bacillati</taxon>
        <taxon>Bacillota</taxon>
        <taxon>Bacilli</taxon>
        <taxon>Lactobacillales</taxon>
        <taxon>Lactobacillaceae</taxon>
        <taxon>Latilactobacillus</taxon>
    </lineage>
</organism>